<gene>
    <name evidence="1" type="primary">dapA</name>
    <name type="ordered locus">RPR_05545</name>
</gene>
<comment type="function">
    <text evidence="1">Catalyzes the condensation of (S)-aspartate-beta-semialdehyde [(S)-ASA] and pyruvate to 4-hydroxy-tetrahydrodipicolinate (HTPA).</text>
</comment>
<comment type="catalytic activity">
    <reaction evidence="1">
        <text>L-aspartate 4-semialdehyde + pyruvate = (2S,4S)-4-hydroxy-2,3,4,5-tetrahydrodipicolinate + H2O + H(+)</text>
        <dbReference type="Rhea" id="RHEA:34171"/>
        <dbReference type="ChEBI" id="CHEBI:15361"/>
        <dbReference type="ChEBI" id="CHEBI:15377"/>
        <dbReference type="ChEBI" id="CHEBI:15378"/>
        <dbReference type="ChEBI" id="CHEBI:67139"/>
        <dbReference type="ChEBI" id="CHEBI:537519"/>
        <dbReference type="EC" id="4.3.3.7"/>
    </reaction>
</comment>
<comment type="pathway">
    <text evidence="1">Amino-acid biosynthesis; L-lysine biosynthesis via DAP pathway; (S)-tetrahydrodipicolinate from L-aspartate: step 3/4.</text>
</comment>
<comment type="subunit">
    <text evidence="1">Homotetramer; dimer of dimers.</text>
</comment>
<comment type="subcellular location">
    <subcellularLocation>
        <location evidence="1">Cytoplasm</location>
    </subcellularLocation>
</comment>
<comment type="similarity">
    <text evidence="1">Belongs to the DapA family.</text>
</comment>
<comment type="caution">
    <text evidence="2">Was originally thought to be a dihydrodipicolinate synthase (DHDPS), catalyzing the condensation of (S)-aspartate-beta-semialdehyde [(S)-ASA] and pyruvate to dihydrodipicolinate (DHDP). However, it was shown in E.coli that the product of the enzymatic reaction is not dihydrodipicolinate but in fact (4S)-4-hydroxy-2,3,4,5-tetrahydro-(2S)-dipicolinic acid (HTPA), and that the consecutive dehydration reaction leading to DHDP is not spontaneous but catalyzed by DapB.</text>
</comment>
<reference key="1">
    <citation type="journal article" date="2009" name="PLoS ONE">
        <title>Genome sequence of the endosymbiont Rickettsia peacockii and comparison with virulent Rickettsia rickettsii: identification of virulence factors.</title>
        <authorList>
            <person name="Felsheim R.F."/>
            <person name="Kurtti T.J."/>
            <person name="Munderloh U.G."/>
        </authorList>
    </citation>
    <scope>NUCLEOTIDE SEQUENCE [LARGE SCALE GENOMIC DNA]</scope>
    <source>
        <strain>Rustic</strain>
    </source>
</reference>
<feature type="chain" id="PRO_1000206036" description="4-hydroxy-tetrahydrodipicolinate synthase">
    <location>
        <begin position="1"/>
        <end position="294"/>
    </location>
</feature>
<feature type="active site" description="Proton donor/acceptor" evidence="1">
    <location>
        <position position="135"/>
    </location>
</feature>
<feature type="active site" description="Schiff-base intermediate with substrate" evidence="1">
    <location>
        <position position="163"/>
    </location>
</feature>
<feature type="binding site" evidence="1">
    <location>
        <position position="47"/>
    </location>
    <ligand>
        <name>pyruvate</name>
        <dbReference type="ChEBI" id="CHEBI:15361"/>
    </ligand>
</feature>
<feature type="binding site" evidence="1">
    <location>
        <position position="205"/>
    </location>
    <ligand>
        <name>pyruvate</name>
        <dbReference type="ChEBI" id="CHEBI:15361"/>
    </ligand>
</feature>
<feature type="site" description="Part of a proton relay during catalysis" evidence="1">
    <location>
        <position position="46"/>
    </location>
</feature>
<feature type="site" description="Part of a proton relay during catalysis" evidence="1">
    <location>
        <position position="109"/>
    </location>
</feature>
<proteinExistence type="inferred from homology"/>
<accession>C4K288</accession>
<protein>
    <recommendedName>
        <fullName evidence="1">4-hydroxy-tetrahydrodipicolinate synthase</fullName>
        <shortName evidence="1">HTPA synthase</shortName>
        <ecNumber evidence="1">4.3.3.7</ecNumber>
    </recommendedName>
</protein>
<dbReference type="EC" id="4.3.3.7" evidence="1"/>
<dbReference type="EMBL" id="CP001227">
    <property type="protein sequence ID" value="ACR47685.1"/>
    <property type="molecule type" value="Genomic_DNA"/>
</dbReference>
<dbReference type="RefSeq" id="WP_012736885.1">
    <property type="nucleotide sequence ID" value="NC_012730.1"/>
</dbReference>
<dbReference type="SMR" id="C4K288"/>
<dbReference type="KEGG" id="rpk:RPR_05545"/>
<dbReference type="HOGENOM" id="CLU_049343_7_1_5"/>
<dbReference type="UniPathway" id="UPA00034">
    <property type="reaction ID" value="UER00017"/>
</dbReference>
<dbReference type="Proteomes" id="UP000005015">
    <property type="component" value="Chromosome"/>
</dbReference>
<dbReference type="GO" id="GO:0005737">
    <property type="term" value="C:cytoplasm"/>
    <property type="evidence" value="ECO:0007669"/>
    <property type="project" value="UniProtKB-SubCell"/>
</dbReference>
<dbReference type="GO" id="GO:0008700">
    <property type="term" value="F:(R,S)-4-hydroxy-2-oxoglutarate aldolase activity"/>
    <property type="evidence" value="ECO:0007669"/>
    <property type="project" value="TreeGrafter"/>
</dbReference>
<dbReference type="GO" id="GO:0008840">
    <property type="term" value="F:4-hydroxy-tetrahydrodipicolinate synthase activity"/>
    <property type="evidence" value="ECO:0007669"/>
    <property type="project" value="UniProtKB-UniRule"/>
</dbReference>
<dbReference type="GO" id="GO:0019877">
    <property type="term" value="P:diaminopimelate biosynthetic process"/>
    <property type="evidence" value="ECO:0007669"/>
    <property type="project" value="UniProtKB-UniRule"/>
</dbReference>
<dbReference type="GO" id="GO:0009436">
    <property type="term" value="P:glyoxylate catabolic process"/>
    <property type="evidence" value="ECO:0007669"/>
    <property type="project" value="TreeGrafter"/>
</dbReference>
<dbReference type="GO" id="GO:0009089">
    <property type="term" value="P:lysine biosynthetic process via diaminopimelate"/>
    <property type="evidence" value="ECO:0007669"/>
    <property type="project" value="UniProtKB-UniRule"/>
</dbReference>
<dbReference type="CDD" id="cd00950">
    <property type="entry name" value="DHDPS"/>
    <property type="match status" value="1"/>
</dbReference>
<dbReference type="Gene3D" id="3.20.20.70">
    <property type="entry name" value="Aldolase class I"/>
    <property type="match status" value="1"/>
</dbReference>
<dbReference type="HAMAP" id="MF_00418">
    <property type="entry name" value="DapA"/>
    <property type="match status" value="1"/>
</dbReference>
<dbReference type="InterPro" id="IPR013785">
    <property type="entry name" value="Aldolase_TIM"/>
</dbReference>
<dbReference type="InterPro" id="IPR005263">
    <property type="entry name" value="DapA"/>
</dbReference>
<dbReference type="InterPro" id="IPR002220">
    <property type="entry name" value="DapA-like"/>
</dbReference>
<dbReference type="InterPro" id="IPR020625">
    <property type="entry name" value="Schiff_base-form_aldolases_AS"/>
</dbReference>
<dbReference type="InterPro" id="IPR020624">
    <property type="entry name" value="Schiff_base-form_aldolases_CS"/>
</dbReference>
<dbReference type="NCBIfam" id="TIGR00674">
    <property type="entry name" value="dapA"/>
    <property type="match status" value="1"/>
</dbReference>
<dbReference type="PANTHER" id="PTHR12128:SF66">
    <property type="entry name" value="4-HYDROXY-2-OXOGLUTARATE ALDOLASE, MITOCHONDRIAL"/>
    <property type="match status" value="1"/>
</dbReference>
<dbReference type="PANTHER" id="PTHR12128">
    <property type="entry name" value="DIHYDRODIPICOLINATE SYNTHASE"/>
    <property type="match status" value="1"/>
</dbReference>
<dbReference type="Pfam" id="PF00701">
    <property type="entry name" value="DHDPS"/>
    <property type="match status" value="1"/>
</dbReference>
<dbReference type="PIRSF" id="PIRSF001365">
    <property type="entry name" value="DHDPS"/>
    <property type="match status" value="1"/>
</dbReference>
<dbReference type="PRINTS" id="PR00146">
    <property type="entry name" value="DHPICSNTHASE"/>
</dbReference>
<dbReference type="SMART" id="SM01130">
    <property type="entry name" value="DHDPS"/>
    <property type="match status" value="1"/>
</dbReference>
<dbReference type="SUPFAM" id="SSF51569">
    <property type="entry name" value="Aldolase"/>
    <property type="match status" value="1"/>
</dbReference>
<dbReference type="PROSITE" id="PS00665">
    <property type="entry name" value="DHDPS_1"/>
    <property type="match status" value="1"/>
</dbReference>
<dbReference type="PROSITE" id="PS00666">
    <property type="entry name" value="DHDPS_2"/>
    <property type="match status" value="1"/>
</dbReference>
<evidence type="ECO:0000255" key="1">
    <source>
        <dbReference type="HAMAP-Rule" id="MF_00418"/>
    </source>
</evidence>
<evidence type="ECO:0000305" key="2"/>
<sequence length="294" mass="32557">MHNIFKGLITALITPFKDNKLDLYALERIVKHQIKHEVDAVLIAGSTGESSSLSFEEYKLLLQTSVEIVNKCIPIISGCSSNNTTYARALAAESTKIGVDGFMASPPSYVKPTQHGIYKHFEALHEACNLPIMLYSAPTRSGVDFSDETILRLSKLPRIVALKDCGVDLERPLRIRATVKKDFNILTGNDEVVLAFNAQGGVGWTSVASNIVPNICKELLEKWNKNDTKGALEIHQKLLPLYTALFVESNPIPIKYAAYYLGLCENEIRPPLTEARDSAKKQIENIITSLSIKI</sequence>
<keyword id="KW-0028">Amino-acid biosynthesis</keyword>
<keyword id="KW-0963">Cytoplasm</keyword>
<keyword id="KW-0220">Diaminopimelate biosynthesis</keyword>
<keyword id="KW-0456">Lyase</keyword>
<keyword id="KW-0457">Lysine biosynthesis</keyword>
<keyword id="KW-0704">Schiff base</keyword>
<name>DAPA_RICPU</name>
<organism>
    <name type="scientific">Rickettsia peacockii (strain Rustic)</name>
    <dbReference type="NCBI Taxonomy" id="562019"/>
    <lineage>
        <taxon>Bacteria</taxon>
        <taxon>Pseudomonadati</taxon>
        <taxon>Pseudomonadota</taxon>
        <taxon>Alphaproteobacteria</taxon>
        <taxon>Rickettsiales</taxon>
        <taxon>Rickettsiaceae</taxon>
        <taxon>Rickettsieae</taxon>
        <taxon>Rickettsia</taxon>
        <taxon>spotted fever group</taxon>
    </lineage>
</organism>